<feature type="chain" id="PRO_0000449098" description="Tensin homolog">
    <location>
        <begin position="1"/>
        <end position="1354"/>
    </location>
</feature>
<feature type="domain" description="Phosphatase tensin-type" evidence="5">
    <location>
        <begin position="38"/>
        <end position="207"/>
    </location>
</feature>
<feature type="domain" description="C2 tensin-type" evidence="4">
    <location>
        <begin position="212"/>
        <end position="337"/>
    </location>
</feature>
<feature type="domain" description="SH2" evidence="3">
    <location>
        <begin position="1083"/>
        <end position="1187"/>
    </location>
</feature>
<feature type="domain" description="PTB" evidence="2">
    <location>
        <begin position="1209"/>
        <end position="1353"/>
    </location>
</feature>
<feature type="region of interest" description="Disordered" evidence="6">
    <location>
        <begin position="380"/>
        <end position="442"/>
    </location>
</feature>
<feature type="region of interest" description="Disordered" evidence="6">
    <location>
        <begin position="597"/>
        <end position="616"/>
    </location>
</feature>
<feature type="region of interest" description="Disordered" evidence="6">
    <location>
        <begin position="638"/>
        <end position="660"/>
    </location>
</feature>
<feature type="region of interest" description="Disordered" evidence="6">
    <location>
        <begin position="692"/>
        <end position="720"/>
    </location>
</feature>
<feature type="region of interest" description="Disordered" evidence="6">
    <location>
        <begin position="734"/>
        <end position="754"/>
    </location>
</feature>
<feature type="region of interest" description="Disordered" evidence="6">
    <location>
        <begin position="794"/>
        <end position="879"/>
    </location>
</feature>
<feature type="region of interest" description="Disordered" evidence="6">
    <location>
        <begin position="1015"/>
        <end position="1035"/>
    </location>
</feature>
<feature type="compositionally biased region" description="Polar residues" evidence="6">
    <location>
        <begin position="391"/>
        <end position="401"/>
    </location>
</feature>
<feature type="compositionally biased region" description="Pro residues" evidence="6">
    <location>
        <begin position="408"/>
        <end position="417"/>
    </location>
</feature>
<feature type="compositionally biased region" description="Polar residues" evidence="6">
    <location>
        <begin position="704"/>
        <end position="720"/>
    </location>
</feature>
<feature type="compositionally biased region" description="Polar residues" evidence="6">
    <location>
        <begin position="734"/>
        <end position="747"/>
    </location>
</feature>
<feature type="compositionally biased region" description="Polar residues" evidence="6">
    <location>
        <begin position="794"/>
        <end position="804"/>
    </location>
</feature>
<feature type="compositionally biased region" description="Basic and acidic residues" evidence="6">
    <location>
        <begin position="821"/>
        <end position="843"/>
    </location>
</feature>
<feature type="compositionally biased region" description="Gly residues" evidence="6">
    <location>
        <begin position="1017"/>
        <end position="1033"/>
    </location>
</feature>
<feature type="active site" description="Phosphocysteine intermediate" evidence="5">
    <location>
        <position position="144"/>
    </location>
</feature>
<feature type="splice variant" id="VSP_060499" description="In isoform h." evidence="9">
    <location>
        <begin position="1"/>
        <end position="1095"/>
    </location>
</feature>
<feature type="splice variant" id="VSP_060492" description="In isoform b." evidence="9">
    <original>MAAAALCCASRKSNKYNNEAGYEVYTISEDQLRLKQKMKDRKEGVQVEYITSRLIVLSCTSETSERKFVESLLKASQQIQNAHNKHIRVWNVSQRRHDISSSLDAIPFGWPSETAPSLEKLCTICKNLDQWMLEHPLNIAVIFCKGGLERCAIVVNAFMRFNAISATDDSVDDRFSMQRFSERFLGPDGPPSYKRYLGYFSSLLSGRISVNSDPLYLHNIILTFFEPINVFLKIYERLVPVYQSKTVALNKSSKFEMDGSLKLRGDIFFKCIVAASSPGSSTRCLFTCQLNTCALELHPINSEGYSVVRLHKEELDLIFNDKKIDNRVTVELVVSHTSGPTTIATAAVQSVHSLLPRNNSYETFELAQDDETNRSRLEVEYSEIRKKSTKSSKSANPINNNQEEEMPVGPPVPPKPSTPIMNGERLGEYGVGGHIGNGDVVPERRGILPASLREKINQKKELEGRATPSIEPDLVGRDRYDKASRCFSYVPAKSMQEAFERPRRTSFSRAIEKRENSVENVSQEEVARTEIPQSYQQNDISTPAKWDEQVEDAKQSALLEELARAPSAMQHNYWGNGEVDNVQVVDQAQRAVITPTSTLQRRPKPPARSGSYRTLNDDAYCSDMDELCDPEYYLNYNSNTAPLPPPRRQEQHAGTRSVQLPRKKMNFDAVTDPLDDVLESTKRLGSAYSVGDVRGGQQQQQEQHNASNDFNFSNTLNNTPTDYRQHYRNRNCQSVTTPRNHHFSTPSREQEADAADTWLSGKLKKVRSKRDIDPDIVRRRTQEKMLLEELKDSAANNDENQHNLPNGHARGAGLQNIDPLAEFRREEERLRNTRSPYGEERWRGRMRGKPPTPPPRESSASPVNSLPRGTPAHHMDRQRHNQSVPLPMHHRQFDEDFDVNSLFNFSHDPRQQSTTLERGGRSLSRGARIQDAYYASQQDLSANNRFNSGQERVAAAIYRAETAHRDMYASGTINRAETPGRYFPENSAVLERSSTPSFPVSRATPLPFHPLLYNNGERGGSGHAAGGGGGGHNGYSTMNNRSASPRLFGGSSTLSRRSSVNSV</original>
    <variation>MSDTATTSTTVVIHLKRSNHDDASASATTAQLQQRSRYCDVSLASSEESSDLSDAEEKDDLIRRTITSSSKDTMEEGDDDDEEEFDDVVMEEDVGGGTDANEQFSRVIQRQISGAGGGILKKSNGK</variation>
    <location>
        <begin position="1"/>
        <end position="1063"/>
    </location>
</feature>
<feature type="splice variant" id="VSP_060500" description="In isoform g." evidence="9">
    <location>
        <begin position="1"/>
        <end position="1037"/>
    </location>
</feature>
<feature type="splice variant" id="VSP_060501" description="In isoform f." evidence="9">
    <location>
        <begin position="1"/>
        <end position="784"/>
    </location>
</feature>
<feature type="splice variant" id="VSP_060502" description="In isoform c and isoform d." evidence="9">
    <location>
        <begin position="1"/>
        <end position="405"/>
    </location>
</feature>
<feature type="splice variant" id="VSP_060503" description="In isoform e." evidence="9">
    <location>
        <begin position="1"/>
        <end position="37"/>
    </location>
</feature>
<feature type="splice variant" id="VSP_060504" description="In isoform d." evidence="9">
    <original>TSEII</original>
    <variation>GRSYL</variation>
    <location>
        <begin position="1065"/>
        <end position="1069"/>
    </location>
</feature>
<feature type="splice variant" id="VSP_060505" description="In isoform d." evidence="9">
    <location>
        <begin position="1070"/>
        <end position="1354"/>
    </location>
</feature>
<feature type="mutagenesis site" description="Does not impair axon regeneration after injury." evidence="7">
    <location>
        <begin position="38"/>
        <end position="335"/>
    </location>
</feature>
<feature type="mutagenesis site" description="Impairs axon regeneration after injury." evidence="7">
    <original>R</original>
    <variation>K</variation>
    <location>
        <position position="1108"/>
    </location>
</feature>
<feature type="mutagenesis site" description="Impairs axon regeneration after injury." evidence="7">
    <location>
        <begin position="1192"/>
        <end position="1354"/>
    </location>
</feature>
<proteinExistence type="evidence at protein level"/>
<keyword id="KW-0025">Alternative splicing</keyword>
<keyword id="KW-0966">Cell projection</keyword>
<keyword id="KW-0378">Hydrolase</keyword>
<keyword id="KW-0904">Protein phosphatase</keyword>
<keyword id="KW-1185">Reference proteome</keyword>
<keyword id="KW-0727">SH2 domain</keyword>
<evidence type="ECO:0000250" key="1">
    <source>
        <dbReference type="UniProtKB" id="Q63HR2"/>
    </source>
</evidence>
<evidence type="ECO:0000255" key="2"/>
<evidence type="ECO:0000255" key="3">
    <source>
        <dbReference type="PROSITE-ProRule" id="PRU00191"/>
    </source>
</evidence>
<evidence type="ECO:0000255" key="4">
    <source>
        <dbReference type="PROSITE-ProRule" id="PRU00589"/>
    </source>
</evidence>
<evidence type="ECO:0000255" key="5">
    <source>
        <dbReference type="PROSITE-ProRule" id="PRU00590"/>
    </source>
</evidence>
<evidence type="ECO:0000256" key="6">
    <source>
        <dbReference type="SAM" id="MobiDB-lite"/>
    </source>
</evidence>
<evidence type="ECO:0000269" key="7">
    <source>
    </source>
</evidence>
<evidence type="ECO:0000303" key="8">
    <source>
    </source>
</evidence>
<evidence type="ECO:0000305" key="9"/>
<evidence type="ECO:0000312" key="10">
    <source>
        <dbReference type="Proteomes" id="UP000001940"/>
    </source>
</evidence>
<evidence type="ECO:0000312" key="11">
    <source>
        <dbReference type="WormBase" id="M01E11.7a"/>
    </source>
</evidence>
<evidence type="ECO:0000312" key="12">
    <source>
        <dbReference type="WormBase" id="M01E11.7b"/>
    </source>
</evidence>
<evidence type="ECO:0000312" key="13">
    <source>
        <dbReference type="WormBase" id="M01E11.7c"/>
    </source>
</evidence>
<evidence type="ECO:0000312" key="14">
    <source>
        <dbReference type="WormBase" id="M01E11.7d"/>
    </source>
</evidence>
<evidence type="ECO:0000312" key="15">
    <source>
        <dbReference type="WormBase" id="M01E11.7e"/>
    </source>
</evidence>
<evidence type="ECO:0000312" key="16">
    <source>
        <dbReference type="WormBase" id="M01E11.7f"/>
    </source>
</evidence>
<evidence type="ECO:0000312" key="17">
    <source>
        <dbReference type="WormBase" id="M01E11.7g"/>
    </source>
</evidence>
<evidence type="ECO:0000312" key="18">
    <source>
        <dbReference type="WormBase" id="M01E11.7h"/>
    </source>
</evidence>
<comment type="function">
    <text evidence="7">Probable phosphatase which regulates axon regeneration after injury by linking the svh-2 and integrin signaling pathways.</text>
</comment>
<comment type="function">
    <molecule>Isoform e</molecule>
    <text evidence="7">Not involved in axon regeneration after injury.</text>
</comment>
<comment type="catalytic activity">
    <reaction evidence="1">
        <text>O-phospho-L-tyrosyl-[protein] + H2O = L-tyrosyl-[protein] + phosphate</text>
        <dbReference type="Rhea" id="RHEA:10684"/>
        <dbReference type="Rhea" id="RHEA-COMP:10136"/>
        <dbReference type="Rhea" id="RHEA-COMP:20101"/>
        <dbReference type="ChEBI" id="CHEBI:15377"/>
        <dbReference type="ChEBI" id="CHEBI:43474"/>
        <dbReference type="ChEBI" id="CHEBI:46858"/>
        <dbReference type="ChEBI" id="CHEBI:61978"/>
        <dbReference type="EC" id="3.1.3.48"/>
    </reaction>
</comment>
<comment type="subunit">
    <text evidence="7">May interact (via SH2 domain) with receptor svh-2 (when tyrosine-phosphorylated) (PubMed:31109965). May interact (via C-terminus) with integrin pat-3 (PubMed:31109965).</text>
</comment>
<comment type="subcellular location">
    <subcellularLocation>
        <location evidence="7">Cell projection</location>
        <location evidence="7">Axon</location>
    </subcellularLocation>
    <text evidence="7">Localizes to punctate structures along the axon in motor neurons.</text>
</comment>
<comment type="alternative products">
    <event type="alternative splicing"/>
    <isoform>
        <id>H2L045-1</id>
        <name evidence="11">a</name>
        <sequence type="displayed"/>
    </isoform>
    <isoform>
        <id>H2L045-2</id>
        <name evidence="12">b</name>
        <name evidence="8">tns-1s</name>
        <sequence type="described" ref="VSP_060492"/>
    </isoform>
    <isoform>
        <id>H2L045-3</id>
        <name evidence="13">c</name>
        <sequence type="described" ref="VSP_060502"/>
    </isoform>
    <isoform>
        <id>H2L045-4</id>
        <name evidence="14">d</name>
        <sequence type="described" ref="VSP_060502 VSP_060504 VSP_060505"/>
    </isoform>
    <isoform>
        <id>H2L045-5</id>
        <name evidence="15">e</name>
        <sequence type="described" ref="VSP_060503"/>
    </isoform>
    <isoform>
        <id>H2L045-6</id>
        <name evidence="16">f</name>
        <sequence type="described" ref="VSP_060501"/>
    </isoform>
    <isoform>
        <id>H2L045-7</id>
        <name evidence="17">g</name>
        <sequence type="described" ref="VSP_060500"/>
    </isoform>
    <isoform>
        <id>H2L045-8</id>
        <name evidence="18">h</name>
        <sequence type="described" ref="VSP_060499"/>
    </isoform>
</comment>
<comment type="tissue specificity">
    <text evidence="7">Expressed in ventral motor neurons, including ventral and dorsal D-type neurons, and in a subset of cells in the head.</text>
</comment>
<comment type="similarity">
    <text evidence="9">Belongs to the PTEN phosphatase protein family.</text>
</comment>
<gene>
    <name evidence="11" type="primary">tns-1</name>
    <name evidence="8" type="synonym">svh-6</name>
    <name evidence="11" type="synonym">tag-163</name>
    <name evidence="11" type="ORF">M01E11.7</name>
</gene>
<reference evidence="10" key="1">
    <citation type="journal article" date="1998" name="Science">
        <title>Genome sequence of the nematode C. elegans: a platform for investigating biology.</title>
        <authorList>
            <consortium name="The C. elegans sequencing consortium"/>
        </authorList>
    </citation>
    <scope>NUCLEOTIDE SEQUENCE [LARGE SCALE GENOMIC DNA]</scope>
    <source>
        <strain evidence="10">Bristol N2</strain>
    </source>
</reference>
<reference evidence="9" key="2">
    <citation type="journal article" date="2019" name="J. Neurosci.">
        <title>C. elegans Tensin Promotes Axon Regeneration by Linking the Met-like SVH-2 and Integrin Signaling Pathways.</title>
        <authorList>
            <person name="Hisamoto N."/>
            <person name="Shimizu T."/>
            <person name="Asai K."/>
            <person name="Sakai Y."/>
            <person name="Pastuhov S.I."/>
            <person name="Hanafusa H."/>
            <person name="Matsumoto K."/>
        </authorList>
    </citation>
    <scope>FUNCTION</scope>
    <scope>INTERACTION WITH SVH-2 AND PAT-3</scope>
    <scope>SUBCELLULAR LOCATION</scope>
    <scope>TISSUE SPECIFICITY</scope>
    <scope>MUTAGENESIS OF 38-MET--SER-335; ARG-1108 AND 1192-ALA--SER-1354</scope>
</reference>
<organism evidence="10">
    <name type="scientific">Caenorhabditis elegans</name>
    <dbReference type="NCBI Taxonomy" id="6239"/>
    <lineage>
        <taxon>Eukaryota</taxon>
        <taxon>Metazoa</taxon>
        <taxon>Ecdysozoa</taxon>
        <taxon>Nematoda</taxon>
        <taxon>Chromadorea</taxon>
        <taxon>Rhabditida</taxon>
        <taxon>Rhabditina</taxon>
        <taxon>Rhabditomorpha</taxon>
        <taxon>Rhabditoidea</taxon>
        <taxon>Rhabditidae</taxon>
        <taxon>Peloderinae</taxon>
        <taxon>Caenorhabditis</taxon>
    </lineage>
</organism>
<accession>H2L045</accession>
<accession>A0A0S4XR26</accession>
<accession>A0A0S4XR31</accession>
<accession>A0A0S4XR51</accession>
<accession>A0A0S4XR69</accession>
<accession>H2L046</accession>
<accession>H2L047</accession>
<accession>P92160</accession>
<name>TENSH_CAEEL</name>
<protein>
    <recommendedName>
        <fullName evidence="11">Tensin homolog</fullName>
        <ecNumber evidence="1">3.1.3.48</ecNumber>
    </recommendedName>
    <alternativeName>
        <fullName evidence="9">C1 domain-containing phosphatase and tensin homolog</fullName>
    </alternativeName>
    <alternativeName>
        <fullName evidence="8">Suppressor of vhp-1 deletion lethality protein svh-6</fullName>
    </alternativeName>
</protein>
<sequence>MAAAALCCASRKSNKYNNEAGYEVYTISEDQLRLKQKMKDRKEGVQVEYITSRLIVLSCTSETSERKFVESLLKASQQIQNAHNKHIRVWNVSQRRHDISSSLDAIPFGWPSETAPSLEKLCTICKNLDQWMLEHPLNIAVIFCKGGLERCAIVVNAFMRFNAISATDDSVDDRFSMQRFSERFLGPDGPPSYKRYLGYFSSLLSGRISVNSDPLYLHNIILTFFEPINVFLKIYERLVPVYQSKTVALNKSSKFEMDGSLKLRGDIFFKCIVAASSPGSSTRCLFTCQLNTCALELHPINSEGYSVVRLHKEELDLIFNDKKIDNRVTVELVVSHTSGPTTIATAAVQSVHSLLPRNNSYETFELAQDDETNRSRLEVEYSEIRKKSTKSSKSANPINNNQEEEMPVGPPVPPKPSTPIMNGERLGEYGVGGHIGNGDVVPERRGILPASLREKINQKKELEGRATPSIEPDLVGRDRYDKASRCFSYVPAKSMQEAFERPRRTSFSRAIEKRENSVENVSQEEVARTEIPQSYQQNDISTPAKWDEQVEDAKQSALLEELARAPSAMQHNYWGNGEVDNVQVVDQAQRAVITPTSTLQRRPKPPARSGSYRTLNDDAYCSDMDELCDPEYYLNYNSNTAPLPPPRRQEQHAGTRSVQLPRKKMNFDAVTDPLDDVLESTKRLGSAYSVGDVRGGQQQQQEQHNASNDFNFSNTLNNTPTDYRQHYRNRNCQSVTTPRNHHFSTPSREQEADAADTWLSGKLKKVRSKRDIDPDIVRRRTQEKMLLEELKDSAANNDENQHNLPNGHARGAGLQNIDPLAEFRREEERLRNTRSPYGEERWRGRMRGKPPTPPPRESSASPVNSLPRGTPAHHMDRQRHNQSVPLPMHHRQFDEDFDVNSLFNFSHDPRQQSTTLERGGRSLSRGARIQDAYYASQQDLSANNRFNSGQERVAAAIYRAETAHRDMYASGTINRAETPGRYFPENSAVLERSSTPSFPVSRATPLPFHPLLYNNGERGGSGHAAGGGGGGHNGYSTMNNRSASPRLFGGSSTLSRRSSVNSVDTSEIIHHHPLFVKDTSKYWYKPTISREQAINMLRDKPPGTFVVRDSNSFPGAFGLALKVSTPPPGVNPGDGSELVRHFLIEPSPKGVKLKGCNNEPVFGSLSALVYQHSITALALPTKLVLPDFDPAATPEHLSATQALLEQGAACNVVYVGSVDVESLTGNECVKRSIATCSQRAINGDSRAVSVHFKVSSQGVTLTDNTRKVFFRRHFNVQSVIFAGMDPIERRFENTRALGFHDGCIAQARLFAFVARIPSSSENACHVFAELEPEQPGSAVVNFINKVMLAQKNRS</sequence>
<dbReference type="EC" id="3.1.3.48" evidence="1"/>
<dbReference type="EMBL" id="BX284601">
    <property type="protein sequence ID" value="CCD71346.2"/>
    <property type="molecule type" value="Genomic_DNA"/>
</dbReference>
<dbReference type="EMBL" id="BX284601">
    <property type="protein sequence ID" value="CCD71347.1"/>
    <property type="molecule type" value="Genomic_DNA"/>
</dbReference>
<dbReference type="EMBL" id="BX284601">
    <property type="protein sequence ID" value="CCD71348.1"/>
    <property type="molecule type" value="Genomic_DNA"/>
</dbReference>
<dbReference type="EMBL" id="BX284601">
    <property type="protein sequence ID" value="CCD71349.1"/>
    <property type="molecule type" value="Genomic_DNA"/>
</dbReference>
<dbReference type="EMBL" id="BX284601">
    <property type="protein sequence ID" value="CUV67053.1"/>
    <property type="molecule type" value="Genomic_DNA"/>
</dbReference>
<dbReference type="EMBL" id="BX284601">
    <property type="protein sequence ID" value="CUV67056.1"/>
    <property type="molecule type" value="Genomic_DNA"/>
</dbReference>
<dbReference type="EMBL" id="BX284601">
    <property type="protein sequence ID" value="CUV67057.1"/>
    <property type="molecule type" value="Genomic_DNA"/>
</dbReference>
<dbReference type="EMBL" id="BX284601">
    <property type="protein sequence ID" value="CUV67058.1"/>
    <property type="molecule type" value="Genomic_DNA"/>
</dbReference>
<dbReference type="PIR" id="T29328">
    <property type="entry name" value="T29328"/>
</dbReference>
<dbReference type="RefSeq" id="NP_001305199.1">
    <molecule id="H2L045-5"/>
    <property type="nucleotide sequence ID" value="NM_001318270.3"/>
</dbReference>
<dbReference type="RefSeq" id="NP_001305202.1">
    <molecule id="H2L045-6"/>
    <property type="nucleotide sequence ID" value="NM_001318273.3"/>
</dbReference>
<dbReference type="RefSeq" id="NP_001305203.1">
    <molecule id="H2L045-7"/>
    <property type="nucleotide sequence ID" value="NM_001318274.3"/>
</dbReference>
<dbReference type="RefSeq" id="NP_001305204.1">
    <molecule id="H2L045-8"/>
    <property type="nucleotide sequence ID" value="NM_001318275.3"/>
</dbReference>
<dbReference type="RefSeq" id="NP_001379959.1">
    <molecule id="H2L045-3"/>
    <property type="nucleotide sequence ID" value="NM_001392327.1"/>
</dbReference>
<dbReference type="RefSeq" id="NP_491636.1">
    <property type="nucleotide sequence ID" value="NM_059235.3"/>
</dbReference>
<dbReference type="RefSeq" id="NP_491637.2">
    <molecule id="H2L045-1"/>
    <property type="nucleotide sequence ID" value="NM_059236.5"/>
</dbReference>
<dbReference type="RefSeq" id="NP_491638.1">
    <molecule id="H2L045-2"/>
    <property type="nucleotide sequence ID" value="NM_059237.7"/>
</dbReference>
<dbReference type="RefSeq" id="NP_740854.1">
    <molecule id="H2L045-4"/>
    <property type="nucleotide sequence ID" value="NM_170867.5"/>
</dbReference>
<dbReference type="SMR" id="H2L045"/>
<dbReference type="FunCoup" id="H2L045">
    <property type="interactions" value="709"/>
</dbReference>
<dbReference type="IntAct" id="H2L045">
    <property type="interactions" value="7"/>
</dbReference>
<dbReference type="STRING" id="6239.M01E11.7a.1"/>
<dbReference type="PaxDb" id="6239-F46F11.3"/>
<dbReference type="PeptideAtlas" id="H2L045"/>
<dbReference type="EnsemblMetazoa" id="M01E11.7a.1">
    <molecule id="H2L045-1"/>
    <property type="protein sequence ID" value="M01E11.7a.1"/>
    <property type="gene ID" value="WBGene00006508"/>
</dbReference>
<dbReference type="EnsemblMetazoa" id="M01E11.7b.1">
    <molecule id="H2L045-2"/>
    <property type="protein sequence ID" value="M01E11.7b.1"/>
    <property type="gene ID" value="WBGene00006508"/>
</dbReference>
<dbReference type="EnsemblMetazoa" id="M01E11.7c.1">
    <molecule id="H2L045-3"/>
    <property type="protein sequence ID" value="M01E11.7c.1"/>
    <property type="gene ID" value="WBGene00006508"/>
</dbReference>
<dbReference type="EnsemblMetazoa" id="M01E11.7c.2">
    <molecule id="H2L045-3"/>
    <property type="protein sequence ID" value="M01E11.7c.2"/>
    <property type="gene ID" value="WBGene00006508"/>
</dbReference>
<dbReference type="EnsemblMetazoa" id="M01E11.7c.3">
    <molecule id="H2L045-3"/>
    <property type="protein sequence ID" value="M01E11.7c.3"/>
    <property type="gene ID" value="WBGene00006508"/>
</dbReference>
<dbReference type="EnsemblMetazoa" id="M01E11.7d.1">
    <molecule id="H2L045-4"/>
    <property type="protein sequence ID" value="M01E11.7d.1"/>
    <property type="gene ID" value="WBGene00006508"/>
</dbReference>
<dbReference type="EnsemblMetazoa" id="M01E11.7e.1">
    <molecule id="H2L045-5"/>
    <property type="protein sequence ID" value="M01E11.7e.1"/>
    <property type="gene ID" value="WBGene00006508"/>
</dbReference>
<dbReference type="EnsemblMetazoa" id="M01E11.7f.1">
    <molecule id="H2L045-6"/>
    <property type="protein sequence ID" value="M01E11.7f.1"/>
    <property type="gene ID" value="WBGene00006508"/>
</dbReference>
<dbReference type="EnsemblMetazoa" id="M01E11.7g.1">
    <molecule id="H2L045-7"/>
    <property type="protein sequence ID" value="M01E11.7g.1"/>
    <property type="gene ID" value="WBGene00006508"/>
</dbReference>
<dbReference type="EnsemblMetazoa" id="M01E11.7h.1">
    <molecule id="H2L045-8"/>
    <property type="protein sequence ID" value="M01E11.7h.1"/>
    <property type="gene ID" value="WBGene00006508"/>
</dbReference>
<dbReference type="GeneID" id="172215"/>
<dbReference type="KEGG" id="cel:CELE_M01E11.7"/>
<dbReference type="UCSC" id="M01E11.7c">
    <property type="organism name" value="c. elegans"/>
</dbReference>
<dbReference type="AGR" id="WB:WBGene00006508"/>
<dbReference type="CTD" id="172215"/>
<dbReference type="WormBase" id="M01E11.7a">
    <molecule id="H2L045-1"/>
    <property type="protein sequence ID" value="CE51166"/>
    <property type="gene ID" value="WBGene00006508"/>
    <property type="gene designation" value="tns-1"/>
</dbReference>
<dbReference type="WormBase" id="M01E11.7b">
    <molecule id="H2L045-2"/>
    <property type="protein sequence ID" value="CE12302"/>
    <property type="gene ID" value="WBGene00006508"/>
    <property type="gene designation" value="tns-1"/>
</dbReference>
<dbReference type="WormBase" id="M01E11.7c">
    <molecule id="H2L045-3"/>
    <property type="protein sequence ID" value="CE28613"/>
    <property type="gene ID" value="WBGene00006508"/>
    <property type="gene designation" value="tns-1"/>
</dbReference>
<dbReference type="WormBase" id="M01E11.7d">
    <molecule id="H2L045-4"/>
    <property type="protein sequence ID" value="CE30558"/>
    <property type="gene ID" value="WBGene00006508"/>
    <property type="gene designation" value="tns-1"/>
</dbReference>
<dbReference type="WormBase" id="M01E11.7e">
    <molecule id="H2L045-5"/>
    <property type="protein sequence ID" value="CE51160"/>
    <property type="gene ID" value="WBGene00006508"/>
    <property type="gene designation" value="tns-1"/>
</dbReference>
<dbReference type="WormBase" id="M01E11.7f">
    <molecule id="H2L045-6"/>
    <property type="protein sequence ID" value="CE51213"/>
    <property type="gene ID" value="WBGene00006508"/>
    <property type="gene designation" value="tns-1"/>
</dbReference>
<dbReference type="WormBase" id="M01E11.7g">
    <molecule id="H2L045-7"/>
    <property type="protein sequence ID" value="CE51205"/>
    <property type="gene ID" value="WBGene00006508"/>
    <property type="gene designation" value="tns-1"/>
</dbReference>
<dbReference type="WormBase" id="M01E11.7h">
    <molecule id="H2L045-8"/>
    <property type="protein sequence ID" value="CE51229"/>
    <property type="gene ID" value="WBGene00006508"/>
    <property type="gene designation" value="tns-1"/>
</dbReference>
<dbReference type="eggNOG" id="KOG1930">
    <property type="taxonomic scope" value="Eukaryota"/>
</dbReference>
<dbReference type="GeneTree" id="ENSGT00940000163886"/>
<dbReference type="HOGENOM" id="CLU_009407_0_0_1"/>
<dbReference type="InParanoid" id="H2L045"/>
<dbReference type="OrthoDB" id="6273691at2759"/>
<dbReference type="Reactome" id="R-CEL-8875513">
    <property type="pathway name" value="MET interacts with TNS proteins"/>
</dbReference>
<dbReference type="PRO" id="PR:H2L045"/>
<dbReference type="Proteomes" id="UP000001940">
    <property type="component" value="Chromosome I"/>
</dbReference>
<dbReference type="Bgee" id="WBGene00006508">
    <property type="expression patterns" value="Expressed in pharyngeal muscle cell (C elegans) and 4 other cell types or tissues"/>
</dbReference>
<dbReference type="GO" id="GO:0030424">
    <property type="term" value="C:axon"/>
    <property type="evidence" value="ECO:0000314"/>
    <property type="project" value="UniProtKB"/>
</dbReference>
<dbReference type="GO" id="GO:0030054">
    <property type="term" value="C:cell junction"/>
    <property type="evidence" value="ECO:0007005"/>
    <property type="project" value="WormBase"/>
</dbReference>
<dbReference type="GO" id="GO:0005925">
    <property type="term" value="C:focal adhesion"/>
    <property type="evidence" value="ECO:0000318"/>
    <property type="project" value="GO_Central"/>
</dbReference>
<dbReference type="GO" id="GO:0031430">
    <property type="term" value="C:M band"/>
    <property type="evidence" value="ECO:0007005"/>
    <property type="project" value="WormBase"/>
</dbReference>
<dbReference type="GO" id="GO:0055120">
    <property type="term" value="C:striated muscle dense body"/>
    <property type="evidence" value="ECO:0007005"/>
    <property type="project" value="WormBase"/>
</dbReference>
<dbReference type="GO" id="GO:0004725">
    <property type="term" value="F:protein tyrosine phosphatase activity"/>
    <property type="evidence" value="ECO:0007669"/>
    <property type="project" value="UniProtKB-EC"/>
</dbReference>
<dbReference type="GO" id="GO:0048680">
    <property type="term" value="P:positive regulation of axon regeneration"/>
    <property type="evidence" value="ECO:0000314"/>
    <property type="project" value="UniProtKB"/>
</dbReference>
<dbReference type="CDD" id="cd01213">
    <property type="entry name" value="PTB_tensin"/>
    <property type="match status" value="1"/>
</dbReference>
<dbReference type="CDD" id="cd14508">
    <property type="entry name" value="PTP_tensin"/>
    <property type="match status" value="1"/>
</dbReference>
<dbReference type="CDD" id="cd09927">
    <property type="entry name" value="SH2_Tensin_like"/>
    <property type="match status" value="1"/>
</dbReference>
<dbReference type="FunFam" id="2.30.29.30:FF:000462">
    <property type="entry name" value="TeNSin homolog"/>
    <property type="match status" value="1"/>
</dbReference>
<dbReference type="Gene3D" id="2.60.40.1110">
    <property type="match status" value="1"/>
</dbReference>
<dbReference type="Gene3D" id="2.30.29.30">
    <property type="entry name" value="Pleckstrin-homology domain (PH domain)/Phosphotyrosine-binding domain (PTB)"/>
    <property type="match status" value="1"/>
</dbReference>
<dbReference type="Gene3D" id="3.90.190.10">
    <property type="entry name" value="Protein tyrosine phosphatase superfamily"/>
    <property type="match status" value="1"/>
</dbReference>
<dbReference type="Gene3D" id="3.30.505.10">
    <property type="entry name" value="SH2 domain"/>
    <property type="match status" value="1"/>
</dbReference>
<dbReference type="InterPro" id="IPR035892">
    <property type="entry name" value="C2_domain_sf"/>
</dbReference>
<dbReference type="InterPro" id="IPR011993">
    <property type="entry name" value="PH-like_dom_sf"/>
</dbReference>
<dbReference type="InterPro" id="IPR029021">
    <property type="entry name" value="Prot-tyrosine_phosphatase-like"/>
</dbReference>
<dbReference type="InterPro" id="IPR013625">
    <property type="entry name" value="PTB"/>
</dbReference>
<dbReference type="InterPro" id="IPR006020">
    <property type="entry name" value="PTB/PI_dom"/>
</dbReference>
<dbReference type="InterPro" id="IPR000980">
    <property type="entry name" value="SH2"/>
</dbReference>
<dbReference type="InterPro" id="IPR036860">
    <property type="entry name" value="SH2_dom_sf"/>
</dbReference>
<dbReference type="InterPro" id="IPR035012">
    <property type="entry name" value="Tensin-like_SH2"/>
</dbReference>
<dbReference type="InterPro" id="IPR014020">
    <property type="entry name" value="Tensin_C2-dom"/>
</dbReference>
<dbReference type="InterPro" id="IPR033929">
    <property type="entry name" value="Tensin_PTB"/>
</dbReference>
<dbReference type="InterPro" id="IPR051484">
    <property type="entry name" value="Tensin_PTEN_phosphatase"/>
</dbReference>
<dbReference type="PANTHER" id="PTHR45734:SF10">
    <property type="entry name" value="BLISTERY, ISOFORM A"/>
    <property type="match status" value="1"/>
</dbReference>
<dbReference type="PANTHER" id="PTHR45734">
    <property type="entry name" value="TENSIN"/>
    <property type="match status" value="1"/>
</dbReference>
<dbReference type="Pfam" id="PF08416">
    <property type="entry name" value="PTB"/>
    <property type="match status" value="1"/>
</dbReference>
<dbReference type="Pfam" id="PF00017">
    <property type="entry name" value="SH2"/>
    <property type="match status" value="1"/>
</dbReference>
<dbReference type="SMART" id="SM00462">
    <property type="entry name" value="PTB"/>
    <property type="match status" value="1"/>
</dbReference>
<dbReference type="SMART" id="SM01326">
    <property type="entry name" value="PTEN_C2"/>
    <property type="match status" value="1"/>
</dbReference>
<dbReference type="SMART" id="SM00252">
    <property type="entry name" value="SH2"/>
    <property type="match status" value="1"/>
</dbReference>
<dbReference type="SUPFAM" id="SSF52799">
    <property type="entry name" value="(Phosphotyrosine protein) phosphatases II"/>
    <property type="match status" value="1"/>
</dbReference>
<dbReference type="SUPFAM" id="SSF49562">
    <property type="entry name" value="C2 domain (Calcium/lipid-binding domain, CaLB)"/>
    <property type="match status" value="1"/>
</dbReference>
<dbReference type="SUPFAM" id="SSF50729">
    <property type="entry name" value="PH domain-like"/>
    <property type="match status" value="1"/>
</dbReference>
<dbReference type="SUPFAM" id="SSF55550">
    <property type="entry name" value="SH2 domain"/>
    <property type="match status" value="1"/>
</dbReference>
<dbReference type="PROSITE" id="PS51182">
    <property type="entry name" value="C2_TENSIN"/>
    <property type="match status" value="1"/>
</dbReference>
<dbReference type="PROSITE" id="PS51181">
    <property type="entry name" value="PPASE_TENSIN"/>
    <property type="match status" value="1"/>
</dbReference>
<dbReference type="PROSITE" id="PS50001">
    <property type="entry name" value="SH2"/>
    <property type="match status" value="1"/>
</dbReference>